<protein>
    <recommendedName>
        <fullName evidence="1">UvrABC system protein C</fullName>
        <shortName evidence="1">Protein UvrC</shortName>
    </recommendedName>
    <alternativeName>
        <fullName evidence="1">Excinuclease ABC subunit C</fullName>
    </alternativeName>
</protein>
<dbReference type="EMBL" id="AL123456">
    <property type="protein sequence ID" value="CCP44179.1"/>
    <property type="molecule type" value="Genomic_DNA"/>
</dbReference>
<dbReference type="PIR" id="A70903">
    <property type="entry name" value="A70903"/>
</dbReference>
<dbReference type="RefSeq" id="NP_215936.1">
    <property type="nucleotide sequence ID" value="NC_000962.3"/>
</dbReference>
<dbReference type="RefSeq" id="WP_003407347.1">
    <property type="nucleotide sequence ID" value="NZ_NVQJ01000038.1"/>
</dbReference>
<dbReference type="SMR" id="P9WFC5"/>
<dbReference type="FunCoup" id="P9WFC5">
    <property type="interactions" value="31"/>
</dbReference>
<dbReference type="STRING" id="83332.Rv1420"/>
<dbReference type="PaxDb" id="83332-Rv1420"/>
<dbReference type="DNASU" id="886672"/>
<dbReference type="GeneID" id="45425398"/>
<dbReference type="GeneID" id="886672"/>
<dbReference type="KEGG" id="mtu:Rv1420"/>
<dbReference type="KEGG" id="mtv:RVBD_1420"/>
<dbReference type="TubercuList" id="Rv1420"/>
<dbReference type="eggNOG" id="COG0322">
    <property type="taxonomic scope" value="Bacteria"/>
</dbReference>
<dbReference type="InParanoid" id="P9WFC5"/>
<dbReference type="OrthoDB" id="9804933at2"/>
<dbReference type="PhylomeDB" id="P9WFC5"/>
<dbReference type="Proteomes" id="UP000001584">
    <property type="component" value="Chromosome"/>
</dbReference>
<dbReference type="GO" id="GO:0005737">
    <property type="term" value="C:cytoplasm"/>
    <property type="evidence" value="ECO:0007669"/>
    <property type="project" value="UniProtKB-SubCell"/>
</dbReference>
<dbReference type="GO" id="GO:0009380">
    <property type="term" value="C:excinuclease repair complex"/>
    <property type="evidence" value="ECO:0000318"/>
    <property type="project" value="GO_Central"/>
</dbReference>
<dbReference type="GO" id="GO:0009274">
    <property type="term" value="C:peptidoglycan-based cell wall"/>
    <property type="evidence" value="ECO:0007005"/>
    <property type="project" value="MTBBASE"/>
</dbReference>
<dbReference type="GO" id="GO:0005886">
    <property type="term" value="C:plasma membrane"/>
    <property type="evidence" value="ECO:0007005"/>
    <property type="project" value="MTBBASE"/>
</dbReference>
<dbReference type="GO" id="GO:0003677">
    <property type="term" value="F:DNA binding"/>
    <property type="evidence" value="ECO:0007669"/>
    <property type="project" value="UniProtKB-UniRule"/>
</dbReference>
<dbReference type="GO" id="GO:0009381">
    <property type="term" value="F:excinuclease ABC activity"/>
    <property type="evidence" value="ECO:0007669"/>
    <property type="project" value="UniProtKB-UniRule"/>
</dbReference>
<dbReference type="GO" id="GO:0006974">
    <property type="term" value="P:DNA damage response"/>
    <property type="evidence" value="ECO:0000318"/>
    <property type="project" value="GO_Central"/>
</dbReference>
<dbReference type="GO" id="GO:0006289">
    <property type="term" value="P:nucleotide-excision repair"/>
    <property type="evidence" value="ECO:0007669"/>
    <property type="project" value="UniProtKB-UniRule"/>
</dbReference>
<dbReference type="GO" id="GO:0009432">
    <property type="term" value="P:SOS response"/>
    <property type="evidence" value="ECO:0007669"/>
    <property type="project" value="UniProtKB-UniRule"/>
</dbReference>
<dbReference type="CDD" id="cd10434">
    <property type="entry name" value="GIY-YIG_UvrC_Cho"/>
    <property type="match status" value="1"/>
</dbReference>
<dbReference type="FunFam" id="1.10.150.20:FF:000005">
    <property type="entry name" value="UvrABC system protein C"/>
    <property type="match status" value="1"/>
</dbReference>
<dbReference type="FunFam" id="3.30.420.340:FF:000003">
    <property type="entry name" value="UvrABC system protein C"/>
    <property type="match status" value="1"/>
</dbReference>
<dbReference type="FunFam" id="3.40.1440.10:FF:000001">
    <property type="entry name" value="UvrABC system protein C"/>
    <property type="match status" value="1"/>
</dbReference>
<dbReference type="Gene3D" id="1.10.150.20">
    <property type="entry name" value="5' to 3' exonuclease, C-terminal subdomain"/>
    <property type="match status" value="1"/>
</dbReference>
<dbReference type="Gene3D" id="3.40.1440.10">
    <property type="entry name" value="GIY-YIG endonuclease"/>
    <property type="match status" value="1"/>
</dbReference>
<dbReference type="Gene3D" id="4.10.860.10">
    <property type="entry name" value="UVR domain"/>
    <property type="match status" value="1"/>
</dbReference>
<dbReference type="Gene3D" id="3.30.420.340">
    <property type="entry name" value="UvrC, RNAse H endonuclease domain"/>
    <property type="match status" value="1"/>
</dbReference>
<dbReference type="HAMAP" id="MF_00203">
    <property type="entry name" value="UvrC"/>
    <property type="match status" value="1"/>
</dbReference>
<dbReference type="InterPro" id="IPR000305">
    <property type="entry name" value="GIY-YIG_endonuc"/>
</dbReference>
<dbReference type="InterPro" id="IPR035901">
    <property type="entry name" value="GIY-YIG_endonuc_sf"/>
</dbReference>
<dbReference type="InterPro" id="IPR047296">
    <property type="entry name" value="GIY-YIG_UvrC_Cho"/>
</dbReference>
<dbReference type="InterPro" id="IPR003583">
    <property type="entry name" value="Hlx-hairpin-Hlx_DNA-bd_motif"/>
</dbReference>
<dbReference type="InterPro" id="IPR010994">
    <property type="entry name" value="RuvA_2-like"/>
</dbReference>
<dbReference type="InterPro" id="IPR001943">
    <property type="entry name" value="UVR_dom"/>
</dbReference>
<dbReference type="InterPro" id="IPR036876">
    <property type="entry name" value="UVR_dom_sf"/>
</dbReference>
<dbReference type="InterPro" id="IPR050066">
    <property type="entry name" value="UvrABC_protein_C"/>
</dbReference>
<dbReference type="InterPro" id="IPR004791">
    <property type="entry name" value="UvrC"/>
</dbReference>
<dbReference type="InterPro" id="IPR001162">
    <property type="entry name" value="UvrC_RNase_H_dom"/>
</dbReference>
<dbReference type="InterPro" id="IPR038476">
    <property type="entry name" value="UvrC_RNase_H_dom_sf"/>
</dbReference>
<dbReference type="NCBIfam" id="NF001824">
    <property type="entry name" value="PRK00558.1-5"/>
    <property type="match status" value="1"/>
</dbReference>
<dbReference type="NCBIfam" id="TIGR00194">
    <property type="entry name" value="uvrC"/>
    <property type="match status" value="1"/>
</dbReference>
<dbReference type="PANTHER" id="PTHR30562:SF1">
    <property type="entry name" value="UVRABC SYSTEM PROTEIN C"/>
    <property type="match status" value="1"/>
</dbReference>
<dbReference type="PANTHER" id="PTHR30562">
    <property type="entry name" value="UVRC/OXIDOREDUCTASE"/>
    <property type="match status" value="1"/>
</dbReference>
<dbReference type="Pfam" id="PF01541">
    <property type="entry name" value="GIY-YIG"/>
    <property type="match status" value="1"/>
</dbReference>
<dbReference type="Pfam" id="PF14520">
    <property type="entry name" value="HHH_5"/>
    <property type="match status" value="1"/>
</dbReference>
<dbReference type="Pfam" id="PF02151">
    <property type="entry name" value="UVR"/>
    <property type="match status" value="1"/>
</dbReference>
<dbReference type="Pfam" id="PF22920">
    <property type="entry name" value="UvrC_RNaseH"/>
    <property type="match status" value="1"/>
</dbReference>
<dbReference type="Pfam" id="PF08459">
    <property type="entry name" value="UvrC_RNaseH_dom"/>
    <property type="match status" value="1"/>
</dbReference>
<dbReference type="SMART" id="SM00465">
    <property type="entry name" value="GIYc"/>
    <property type="match status" value="1"/>
</dbReference>
<dbReference type="SMART" id="SM00278">
    <property type="entry name" value="HhH1"/>
    <property type="match status" value="2"/>
</dbReference>
<dbReference type="SUPFAM" id="SSF46600">
    <property type="entry name" value="C-terminal UvrC-binding domain of UvrB"/>
    <property type="match status" value="1"/>
</dbReference>
<dbReference type="SUPFAM" id="SSF82771">
    <property type="entry name" value="GIY-YIG endonuclease"/>
    <property type="match status" value="1"/>
</dbReference>
<dbReference type="SUPFAM" id="SSF47781">
    <property type="entry name" value="RuvA domain 2-like"/>
    <property type="match status" value="1"/>
</dbReference>
<dbReference type="PROSITE" id="PS50164">
    <property type="entry name" value="GIY_YIG"/>
    <property type="match status" value="1"/>
</dbReference>
<dbReference type="PROSITE" id="PS50151">
    <property type="entry name" value="UVR"/>
    <property type="match status" value="1"/>
</dbReference>
<dbReference type="PROSITE" id="PS50165">
    <property type="entry name" value="UVRC"/>
    <property type="match status" value="1"/>
</dbReference>
<evidence type="ECO:0000255" key="1">
    <source>
        <dbReference type="HAMAP-Rule" id="MF_00203"/>
    </source>
</evidence>
<organism>
    <name type="scientific">Mycobacterium tuberculosis (strain ATCC 25618 / H37Rv)</name>
    <dbReference type="NCBI Taxonomy" id="83332"/>
    <lineage>
        <taxon>Bacteria</taxon>
        <taxon>Bacillati</taxon>
        <taxon>Actinomycetota</taxon>
        <taxon>Actinomycetes</taxon>
        <taxon>Mycobacteriales</taxon>
        <taxon>Mycobacteriaceae</taxon>
        <taxon>Mycobacterium</taxon>
        <taxon>Mycobacterium tuberculosis complex</taxon>
    </lineage>
</organism>
<sequence length="646" mass="71614">MPDPATYRPAPGSIPVEPGVYRFRDQHGRVIYVGKAKSLRSRLTSYFADVASLAPRTRQLVTTAAKVEWTVVGTEVEALQLEYTWIKEFDPRFNVRYRDDKSYPVLAVTLGEEFPRLMVYRGPRRKGVRYFGPYSHAWAIRETLDLLTRVFPARTCSAGVFKRHRQIDRPCLLGYIDKCSAPCIGRVDAAQHRQIVADFCDFLSGKTDRFARALEQQMNAAAEQLDFERAARLRDDLSALKRAMEKQAVVLGDGTDADVVAFADDELEAAVQVFHVRGGRVRGQRGWIVEKPGEPGDSGIQLVEQFLTQFYGDQAALDDAADESANPVPREVLVPCLPSNAEELASWLSGLRGSRVVLRVPRRGDKRALAETVHRNAEDALQQHKLKRASDFNARSAALQSIQDSLGLADAPLRIECVDVSHVQGTDVVGSLVVFEDGLPRKSDYRHFGIREAAGQGRSDDVACIAEVTRRRFLRHLRDQSDPDLLSPERKSRRFAYPPNLYVVDGGAPQVNAASAVIDELGVTDVAVIGLAKRLEEVWVPSEPDPIIMPRNSEGLYLLQRVRDEAHRFAITYHRSKRSTRMTASALDSVPGLGEHRRKALVTHFGSIARLKEATVDEITAVPGIGVATATAVHDALRPDSSGAAR</sequence>
<keyword id="KW-0963">Cytoplasm</keyword>
<keyword id="KW-0227">DNA damage</keyword>
<keyword id="KW-0228">DNA excision</keyword>
<keyword id="KW-0234">DNA repair</keyword>
<keyword id="KW-0267">Excision nuclease</keyword>
<keyword id="KW-1185">Reference proteome</keyword>
<keyword id="KW-0742">SOS response</keyword>
<feature type="chain" id="PRO_0000138320" description="UvrABC system protein C">
    <location>
        <begin position="1"/>
        <end position="646"/>
    </location>
</feature>
<feature type="domain" description="GIY-YIG" evidence="1">
    <location>
        <begin position="16"/>
        <end position="95"/>
    </location>
</feature>
<feature type="domain" description="UVR" evidence="1">
    <location>
        <begin position="208"/>
        <end position="243"/>
    </location>
</feature>
<gene>
    <name evidence="1" type="primary">uvrC</name>
    <name type="ordered locus">Rv1420</name>
    <name type="ORF">MTCY21B4.38</name>
</gene>
<reference key="1">
    <citation type="journal article" date="1998" name="Nature">
        <title>Deciphering the biology of Mycobacterium tuberculosis from the complete genome sequence.</title>
        <authorList>
            <person name="Cole S.T."/>
            <person name="Brosch R."/>
            <person name="Parkhill J."/>
            <person name="Garnier T."/>
            <person name="Churcher C.M."/>
            <person name="Harris D.E."/>
            <person name="Gordon S.V."/>
            <person name="Eiglmeier K."/>
            <person name="Gas S."/>
            <person name="Barry C.E. III"/>
            <person name="Tekaia F."/>
            <person name="Badcock K."/>
            <person name="Basham D."/>
            <person name="Brown D."/>
            <person name="Chillingworth T."/>
            <person name="Connor R."/>
            <person name="Davies R.M."/>
            <person name="Devlin K."/>
            <person name="Feltwell T."/>
            <person name="Gentles S."/>
            <person name="Hamlin N."/>
            <person name="Holroyd S."/>
            <person name="Hornsby T."/>
            <person name="Jagels K."/>
            <person name="Krogh A."/>
            <person name="McLean J."/>
            <person name="Moule S."/>
            <person name="Murphy L.D."/>
            <person name="Oliver S."/>
            <person name="Osborne J."/>
            <person name="Quail M.A."/>
            <person name="Rajandream M.A."/>
            <person name="Rogers J."/>
            <person name="Rutter S."/>
            <person name="Seeger K."/>
            <person name="Skelton S."/>
            <person name="Squares S."/>
            <person name="Squares R."/>
            <person name="Sulston J.E."/>
            <person name="Taylor K."/>
            <person name="Whitehead S."/>
            <person name="Barrell B.G."/>
        </authorList>
    </citation>
    <scope>NUCLEOTIDE SEQUENCE [LARGE SCALE GENOMIC DNA]</scope>
    <source>
        <strain>ATCC 25618 / H37Rv</strain>
    </source>
</reference>
<reference key="2">
    <citation type="journal article" date="2011" name="Mol. Cell. Proteomics">
        <title>Proteogenomic analysis of Mycobacterium tuberculosis by high resolution mass spectrometry.</title>
        <authorList>
            <person name="Kelkar D.S."/>
            <person name="Kumar D."/>
            <person name="Kumar P."/>
            <person name="Balakrishnan L."/>
            <person name="Muthusamy B."/>
            <person name="Yadav A.K."/>
            <person name="Shrivastava P."/>
            <person name="Marimuthu A."/>
            <person name="Anand S."/>
            <person name="Sundaram H."/>
            <person name="Kingsbury R."/>
            <person name="Harsha H.C."/>
            <person name="Nair B."/>
            <person name="Prasad T.S."/>
            <person name="Chauhan D.S."/>
            <person name="Katoch K."/>
            <person name="Katoch V.M."/>
            <person name="Kumar P."/>
            <person name="Chaerkady R."/>
            <person name="Ramachandran S."/>
            <person name="Dash D."/>
            <person name="Pandey A."/>
        </authorList>
    </citation>
    <scope>IDENTIFICATION BY MASS SPECTROMETRY [LARGE SCALE ANALYSIS]</scope>
    <source>
        <strain>ATCC 25618 / H37Rv</strain>
    </source>
</reference>
<comment type="function">
    <text evidence="1">The UvrABC repair system catalyzes the recognition and processing of DNA lesions. UvrC both incises the 5' and 3' sides of the lesion. The N-terminal half is responsible for the 3' incision and the C-terminal half is responsible for the 5' incision.</text>
</comment>
<comment type="subunit">
    <text evidence="1">Interacts with UvrB in an incision complex.</text>
</comment>
<comment type="subcellular location">
    <subcellularLocation>
        <location evidence="1">Cytoplasm</location>
    </subcellularLocation>
</comment>
<comment type="similarity">
    <text evidence="1">Belongs to the UvrC family.</text>
</comment>
<name>UVRC_MYCTU</name>
<accession>P9WFC5</accession>
<accession>L0T9C4</accession>
<accession>P67426</accession>
<accession>P71689</accession>
<proteinExistence type="evidence at protein level"/>